<accession>O42252</accession>
<accession>Q1EQX0</accession>
<accession>Q78CQ9</accession>
<accession>Q9PWE7</accession>
<reference evidence="11 12" key="1">
    <citation type="submission" date="1997-09" db="EMBL/GenBank/DDBJ databases">
        <title>Neural src interacting protein (NSIP).</title>
        <authorList>
            <person name="Mikhailik A."/>
            <person name="Dezelee P."/>
            <person name="Calothy G."/>
        </authorList>
    </citation>
    <scope>NUCLEOTIDE SEQUENCE [MRNA] (ISOFORMS A AND C)</scope>
    <source>
        <strain evidence="12">Brown leghorn</strain>
        <tissue evidence="12">Neuroretina</tissue>
    </source>
</reference>
<reference evidence="11 13" key="2">
    <citation type="journal article" date="1999" name="Nat. Genet.">
        <title>RLIM inhibits functional activity of LIM homeodomain transcription factors via recruitment of the histone deacetylase complex.</title>
        <authorList>
            <person name="Bach I."/>
            <person name="Rodriguez-Esteban C."/>
            <person name="Carriere C."/>
            <person name="Bhushan A."/>
            <person name="Krones A."/>
            <person name="Rose D.W."/>
            <person name="Glass C.K."/>
            <person name="Andersen B."/>
            <person name="Izpisua-Belmonte J.-C."/>
            <person name="Rosenfeld M.G."/>
        </authorList>
    </citation>
    <scope>NUCLEOTIDE SEQUENCE [MRNA] (ISOFORM D)</scope>
    <scope>TISSUE SPECIFICITY</scope>
    <source>
        <tissue evidence="5">Limb</tissue>
    </source>
</reference>
<reference evidence="11 14" key="3">
    <citation type="journal article" date="2006" name="J. Biochem.">
        <title>Spliced isoforms of LIM-domain-binding protein (CLIM/NLI/Ldb) lacking the LIM-interaction domain.</title>
        <authorList>
            <person name="Tran Y.H."/>
            <person name="Xu Z."/>
            <person name="Kato A."/>
            <person name="Mistry A.C."/>
            <person name="Goya Y."/>
            <person name="Taira M."/>
            <person name="Brandt S.J."/>
            <person name="Hirose S."/>
        </authorList>
    </citation>
    <scope>NUCLEOTIDE SEQUENCE [MRNA] (ISOFORM B)</scope>
    <scope>ALTERNATIVE SPLICING</scope>
    <source>
        <tissue evidence="6">Fetus</tissue>
    </source>
</reference>
<comment type="function">
    <text evidence="11">Binds to the LIM domain of a wide variety of LIM domain-containing transcription factors.</text>
</comment>
<comment type="subunit">
    <text evidence="1">Forms homodimers and heterodimers.</text>
</comment>
<comment type="subcellular location">
    <subcellularLocation>
        <location evidence="11">Nucleus</location>
    </subcellularLocation>
</comment>
<comment type="alternative products">
    <event type="alternative splicing"/>
    <isoform>
        <id>O42252-1</id>
        <name evidence="7">c</name>
        <sequence type="displayed"/>
    </isoform>
    <isoform>
        <id>O42252-2</id>
        <name evidence="7">a</name>
        <sequence type="described" ref="VSP_052323"/>
    </isoform>
    <isoform>
        <id>O42252-3</id>
        <name evidence="6">b</name>
        <sequence type="described" ref="VSP_052323 VSP_052325 VSP_052326"/>
    </isoform>
    <isoform>
        <id>O42252-4</id>
        <name evidence="5">d</name>
        <sequence type="described" ref="VSP_052323 VSP_052324"/>
    </isoform>
</comment>
<comment type="tissue specificity">
    <text evidence="5">First expressed at stages 15-16 in presumptive limb mesoderm. As limb outgrowth proceeds, expressed in the entire limb bud, concentrating in the distal mesoderm throughout limb development. Both hindlimbs and forelimbs exhibit similar expression patterns.</text>
</comment>
<comment type="domain">
    <text evidence="1">The dimerization domain is located in the N-terminus.</text>
</comment>
<comment type="miscellaneous">
    <molecule>Isoform b</molecule>
    <text evidence="6">Due to intron retention. Lacks LIM-binding domain.</text>
</comment>
<comment type="similarity">
    <text evidence="2">Belongs to the LDB family.</text>
</comment>
<gene>
    <name evidence="14" type="primary">LDB1</name>
    <name type="synonym">CLIM2</name>
    <name type="synonym">NSIP</name>
</gene>
<evidence type="ECO:0000250" key="1">
    <source>
        <dbReference type="UniProtKB" id="P70662"/>
    </source>
</evidence>
<evidence type="ECO:0000255" key="2"/>
<evidence type="ECO:0000255" key="3">
    <source>
        <dbReference type="PROSITE-ProRule" id="PRU01302"/>
    </source>
</evidence>
<evidence type="ECO:0000256" key="4">
    <source>
        <dbReference type="SAM" id="MobiDB-lite"/>
    </source>
</evidence>
<evidence type="ECO:0000269" key="5">
    <source>
    </source>
</evidence>
<evidence type="ECO:0000269" key="6">
    <source>
    </source>
</evidence>
<evidence type="ECO:0000269" key="7">
    <source ref="1"/>
</evidence>
<evidence type="ECO:0000303" key="8">
    <source>
    </source>
</evidence>
<evidence type="ECO:0000303" key="9">
    <source>
    </source>
</evidence>
<evidence type="ECO:0000303" key="10">
    <source ref="1"/>
</evidence>
<evidence type="ECO:0000305" key="11"/>
<evidence type="ECO:0000312" key="12">
    <source>
        <dbReference type="EMBL" id="AAB82581.1"/>
    </source>
</evidence>
<evidence type="ECO:0000312" key="13">
    <source>
        <dbReference type="EMBL" id="AAD34208.1"/>
    </source>
</evidence>
<evidence type="ECO:0000312" key="14">
    <source>
        <dbReference type="EMBL" id="BAE95403.1"/>
    </source>
</evidence>
<dbReference type="EMBL" id="AF026037">
    <property type="protein sequence ID" value="AAB82581.1"/>
    <property type="molecule type" value="mRNA"/>
</dbReference>
<dbReference type="EMBL" id="AF026038">
    <property type="protein sequence ID" value="AAB82582.1"/>
    <property type="molecule type" value="mRNA"/>
</dbReference>
<dbReference type="EMBL" id="AF069991">
    <property type="protein sequence ID" value="AAD34208.1"/>
    <property type="molecule type" value="mRNA"/>
</dbReference>
<dbReference type="EMBL" id="AB250385">
    <property type="protein sequence ID" value="BAE95403.1"/>
    <property type="molecule type" value="mRNA"/>
</dbReference>
<dbReference type="RefSeq" id="NP_990401.1">
    <molecule id="O42252-1"/>
    <property type="nucleotide sequence ID" value="NM_205070.2"/>
</dbReference>
<dbReference type="RefSeq" id="XP_015144067.1">
    <property type="nucleotide sequence ID" value="XM_015288581.1"/>
</dbReference>
<dbReference type="RefSeq" id="XP_015144068.1">
    <molecule id="O42252-2"/>
    <property type="nucleotide sequence ID" value="XM_015288582.4"/>
</dbReference>
<dbReference type="RefSeq" id="XP_015144069.1">
    <molecule id="O42252-2"/>
    <property type="nucleotide sequence ID" value="XM_015288583.4"/>
</dbReference>
<dbReference type="RefSeq" id="XP_046775878.1">
    <molecule id="O42252-2"/>
    <property type="nucleotide sequence ID" value="XM_046919922.1"/>
</dbReference>
<dbReference type="RefSeq" id="XP_046775879.1">
    <molecule id="O42252-2"/>
    <property type="nucleotide sequence ID" value="XM_046919923.1"/>
</dbReference>
<dbReference type="RefSeq" id="XP_046775880.1">
    <molecule id="O42252-2"/>
    <property type="nucleotide sequence ID" value="XM_046919924.1"/>
</dbReference>
<dbReference type="RefSeq" id="XP_046775881.1">
    <molecule id="O42252-2"/>
    <property type="nucleotide sequence ID" value="XM_046919925.1"/>
</dbReference>
<dbReference type="RefSeq" id="XP_046775882.1">
    <molecule id="O42252-2"/>
    <property type="nucleotide sequence ID" value="XM_046919926.1"/>
</dbReference>
<dbReference type="RefSeq" id="XP_046798691.1">
    <molecule id="O42252-2"/>
    <property type="nucleotide sequence ID" value="XM_046942735.1"/>
</dbReference>
<dbReference type="RefSeq" id="XP_046798692.1">
    <molecule id="O42252-2"/>
    <property type="nucleotide sequence ID" value="XM_046942736.1"/>
</dbReference>
<dbReference type="RefSeq" id="XP_046798693.1">
    <molecule id="O42252-2"/>
    <property type="nucleotide sequence ID" value="XM_046942737.1"/>
</dbReference>
<dbReference type="SMR" id="O42252"/>
<dbReference type="FunCoup" id="O42252">
    <property type="interactions" value="2099"/>
</dbReference>
<dbReference type="STRING" id="9031.ENSGALP00000053833"/>
<dbReference type="GlyGen" id="O42252">
    <property type="glycosylation" value="1 site"/>
</dbReference>
<dbReference type="PaxDb" id="9031-ENSGALP00000012348"/>
<dbReference type="Ensembl" id="ENSGALT00010050587.1">
    <molecule id="O42252-1"/>
    <property type="protein sequence ID" value="ENSGALP00010029862.1"/>
    <property type="gene ID" value="ENSGALG00010020921.1"/>
</dbReference>
<dbReference type="GeneID" id="395952"/>
<dbReference type="KEGG" id="gga:395952"/>
<dbReference type="CTD" id="8861"/>
<dbReference type="VEuPathDB" id="HostDB:geneid_395952"/>
<dbReference type="eggNOG" id="KOG2181">
    <property type="taxonomic scope" value="Eukaryota"/>
</dbReference>
<dbReference type="GeneTree" id="ENSGT00390000005639"/>
<dbReference type="InParanoid" id="O42252"/>
<dbReference type="OMA" id="KMSVGCA"/>
<dbReference type="OrthoDB" id="774557at2759"/>
<dbReference type="PhylomeDB" id="O42252"/>
<dbReference type="Reactome" id="R-GGA-8939236">
    <property type="pathway name" value="RUNX1 regulates transcription of genes involved in differentiation of HSCs"/>
</dbReference>
<dbReference type="PRO" id="PR:O42252"/>
<dbReference type="Proteomes" id="UP000000539">
    <property type="component" value="Chromosome 6"/>
</dbReference>
<dbReference type="Bgee" id="ENSGALG00000007641">
    <property type="expression patterns" value="Expressed in ovary and 13 other cell types or tissues"/>
</dbReference>
<dbReference type="GO" id="GO:0005634">
    <property type="term" value="C:nucleus"/>
    <property type="evidence" value="ECO:0000250"/>
    <property type="project" value="UniProtKB"/>
</dbReference>
<dbReference type="GO" id="GO:0032991">
    <property type="term" value="C:protein-containing complex"/>
    <property type="evidence" value="ECO:0000250"/>
    <property type="project" value="UniProtKB"/>
</dbReference>
<dbReference type="GO" id="GO:0005667">
    <property type="term" value="C:transcription regulator complex"/>
    <property type="evidence" value="ECO:0000318"/>
    <property type="project" value="GO_Central"/>
</dbReference>
<dbReference type="GO" id="GO:0030274">
    <property type="term" value="F:LIM domain binding"/>
    <property type="evidence" value="ECO:0000250"/>
    <property type="project" value="UniProtKB"/>
</dbReference>
<dbReference type="GO" id="GO:0042803">
    <property type="term" value="F:protein homodimerization activity"/>
    <property type="evidence" value="ECO:0000250"/>
    <property type="project" value="UniProtKB"/>
</dbReference>
<dbReference type="GO" id="GO:0003712">
    <property type="term" value="F:transcription coregulator activity"/>
    <property type="evidence" value="ECO:0000318"/>
    <property type="project" value="GO_Central"/>
</dbReference>
<dbReference type="GO" id="GO:0009948">
    <property type="term" value="P:anterior/posterior axis specification"/>
    <property type="evidence" value="ECO:0000250"/>
    <property type="project" value="UniProtKB"/>
</dbReference>
<dbReference type="GO" id="GO:0045647">
    <property type="term" value="P:negative regulation of erythrocyte differentiation"/>
    <property type="evidence" value="ECO:0000250"/>
    <property type="project" value="UniProtKB"/>
</dbReference>
<dbReference type="GO" id="GO:0000122">
    <property type="term" value="P:negative regulation of transcription by RNA polymerase II"/>
    <property type="evidence" value="ECO:0000318"/>
    <property type="project" value="GO_Central"/>
</dbReference>
<dbReference type="GO" id="GO:0007399">
    <property type="term" value="P:nervous system development"/>
    <property type="evidence" value="ECO:0000318"/>
    <property type="project" value="GO_Central"/>
</dbReference>
<dbReference type="GO" id="GO:0030182">
    <property type="term" value="P:neuron differentiation"/>
    <property type="evidence" value="ECO:0000250"/>
    <property type="project" value="UniProtKB"/>
</dbReference>
<dbReference type="GO" id="GO:0045944">
    <property type="term" value="P:positive regulation of transcription by RNA polymerase II"/>
    <property type="evidence" value="ECO:0000318"/>
    <property type="project" value="GO_Central"/>
</dbReference>
<dbReference type="GO" id="GO:0016055">
    <property type="term" value="P:Wnt signaling pathway"/>
    <property type="evidence" value="ECO:0000250"/>
    <property type="project" value="UniProtKB"/>
</dbReference>
<dbReference type="FunFam" id="2.10.110.10:FF:000063">
    <property type="entry name" value="LIM domain-binding protein 2 isoform X2"/>
    <property type="match status" value="1"/>
</dbReference>
<dbReference type="Gene3D" id="2.10.110.10">
    <property type="entry name" value="Cysteine Rich Protein"/>
    <property type="match status" value="1"/>
</dbReference>
<dbReference type="InterPro" id="IPR041363">
    <property type="entry name" value="LID"/>
</dbReference>
<dbReference type="InterPro" id="IPR029005">
    <property type="entry name" value="LIM-bd/SEUSS"/>
</dbReference>
<dbReference type="PANTHER" id="PTHR10378">
    <property type="entry name" value="LIM DOMAIN-BINDING PROTEIN"/>
    <property type="match status" value="1"/>
</dbReference>
<dbReference type="Pfam" id="PF17916">
    <property type="entry name" value="LID"/>
    <property type="match status" value="1"/>
</dbReference>
<dbReference type="Pfam" id="PF01803">
    <property type="entry name" value="LIM_bind"/>
    <property type="match status" value="1"/>
</dbReference>
<dbReference type="PROSITE" id="PS51957">
    <property type="entry name" value="LID"/>
    <property type="match status" value="1"/>
</dbReference>
<feature type="chain" id="PRO_0000284554" description="LIM domain-binding protein 1">
    <location>
        <begin position="1"/>
        <end position="411"/>
    </location>
</feature>
<feature type="domain" description="LIM interaction domain (LID)" evidence="3">
    <location>
        <begin position="336"/>
        <end position="375"/>
    </location>
</feature>
<feature type="region of interest" description="Disordered" evidence="4">
    <location>
        <begin position="284"/>
        <end position="330"/>
    </location>
</feature>
<feature type="region of interest" description="Disordered" evidence="4">
    <location>
        <begin position="367"/>
        <end position="411"/>
    </location>
</feature>
<feature type="compositionally biased region" description="Low complexity" evidence="4">
    <location>
        <begin position="302"/>
        <end position="318"/>
    </location>
</feature>
<feature type="splice variant" id="VSP_052323" description="In isoform a, isoform b and isoform d." evidence="8 9 10">
    <location>
        <begin position="1"/>
        <end position="36"/>
    </location>
</feature>
<feature type="splice variant" id="VSP_052324" description="In isoform d." evidence="8">
    <location>
        <begin position="334"/>
        <end position="335"/>
    </location>
</feature>
<feature type="splice variant" id="VSP_052325" description="In isoform b." evidence="9">
    <original>DVMVVGEPTLMGGEFGDEDERLIT</original>
    <variation>VSIPFPFSLPSPGWRGGLPAPGIG</variation>
    <location>
        <begin position="336"/>
        <end position="359"/>
    </location>
</feature>
<feature type="splice variant" id="VSP_052326" description="In isoform b." evidence="9">
    <location>
        <begin position="360"/>
        <end position="411"/>
    </location>
</feature>
<feature type="sequence conflict" description="In Ref. 2; AAD34208." evidence="11" ref="2">
    <original>P</original>
    <variation>A</variation>
    <location>
        <position position="50"/>
    </location>
</feature>
<feature type="sequence conflict" description="In Ref. 3; BAE95403." evidence="11" ref="3">
    <original>L</original>
    <variation>F</variation>
    <location>
        <position position="243"/>
    </location>
</feature>
<organism>
    <name type="scientific">Gallus gallus</name>
    <name type="common">Chicken</name>
    <dbReference type="NCBI Taxonomy" id="9031"/>
    <lineage>
        <taxon>Eukaryota</taxon>
        <taxon>Metazoa</taxon>
        <taxon>Chordata</taxon>
        <taxon>Craniata</taxon>
        <taxon>Vertebrata</taxon>
        <taxon>Euteleostomi</taxon>
        <taxon>Archelosauria</taxon>
        <taxon>Archosauria</taxon>
        <taxon>Dinosauria</taxon>
        <taxon>Saurischia</taxon>
        <taxon>Theropoda</taxon>
        <taxon>Coelurosauria</taxon>
        <taxon>Aves</taxon>
        <taxon>Neognathae</taxon>
        <taxon>Galloanserae</taxon>
        <taxon>Galliformes</taxon>
        <taxon>Phasianidae</taxon>
        <taxon>Phasianinae</taxon>
        <taxon>Gallus</taxon>
    </lineage>
</organism>
<keyword id="KW-0025">Alternative splicing</keyword>
<keyword id="KW-0539">Nucleus</keyword>
<keyword id="KW-1185">Reference proteome</keyword>
<proteinExistence type="evidence at transcript level"/>
<name>LDB1_CHICK</name>
<protein>
    <recommendedName>
        <fullName>LIM domain-binding protein 1</fullName>
        <shortName>LDB-1</shortName>
    </recommendedName>
    <alternativeName>
        <fullName>Carboxyl-terminal LIM domain-binding protein 2</fullName>
        <shortName>CLIM-2</shortName>
    </alternativeName>
    <alternativeName>
        <fullName>LIM domain-binding factor CLIM2</fullName>
        <shortName>cLdb1</shortName>
    </alternativeName>
    <alternativeName>
        <fullName>Neural Src-interacting protein</fullName>
    </alternativeName>
    <alternativeName>
        <fullName>Nuclear LIM interactor</fullName>
    </alternativeName>
</protein>
<sequence>MSVGCACPGCSSKSFKLYSPKEPPNGNAFPPFHPGTMLDRDVGPTPMYPPTYLEPGIGRHTPYGNQTDYRIFELNKRLQNWTEECDNLWWDAFTTEFFEDDAMLTITFCLEDGPKRYTIGRTLIPRYFRSIFEGGATELYYVLKHPKESFHNNFVSLDCDQCTMVTQHGKPMFTQVCVEGRLYLEFMFDDMMRIKTWHFSIRQHRELIPRSILAMHAQDPQMLDQLSKNITRCGLSNSTLNYLRLCVILEPMQELMSRHKTYSLSPRDCLKTCLFQKWQRMVAPPAEPARQQPSKRRKRKMSGGSTMSSGGGNTNNSNSKKKSPASTFALSSQVPDVMVVGEPTLMGGEFGDEDERLITRLENTQFDAANGIDDEDSFNNSPALGANSPWNSKPPSSQESKSENPTSQASQ</sequence>